<accession>Q8X5J8</accession>
<accession>Q7AH49</accession>
<reference key="1">
    <citation type="journal article" date="2001" name="Nature">
        <title>Genome sequence of enterohaemorrhagic Escherichia coli O157:H7.</title>
        <authorList>
            <person name="Perna N.T."/>
            <person name="Plunkett G. III"/>
            <person name="Burland V."/>
            <person name="Mau B."/>
            <person name="Glasner J.D."/>
            <person name="Rose D.J."/>
            <person name="Mayhew G.F."/>
            <person name="Evans P.S."/>
            <person name="Gregor J."/>
            <person name="Kirkpatrick H.A."/>
            <person name="Posfai G."/>
            <person name="Hackett J."/>
            <person name="Klink S."/>
            <person name="Boutin A."/>
            <person name="Shao Y."/>
            <person name="Miller L."/>
            <person name="Grotbeck E.J."/>
            <person name="Davis N.W."/>
            <person name="Lim A."/>
            <person name="Dimalanta E.T."/>
            <person name="Potamousis K."/>
            <person name="Apodaca J."/>
            <person name="Anantharaman T.S."/>
            <person name="Lin J."/>
            <person name="Yen G."/>
            <person name="Schwartz D.C."/>
            <person name="Welch R.A."/>
            <person name="Blattner F.R."/>
        </authorList>
    </citation>
    <scope>NUCLEOTIDE SEQUENCE [LARGE SCALE GENOMIC DNA]</scope>
    <source>
        <strain>O157:H7 / EDL933 / ATCC 700927 / EHEC</strain>
    </source>
</reference>
<reference key="2">
    <citation type="journal article" date="2001" name="DNA Res.">
        <title>Complete genome sequence of enterohemorrhagic Escherichia coli O157:H7 and genomic comparison with a laboratory strain K-12.</title>
        <authorList>
            <person name="Hayashi T."/>
            <person name="Makino K."/>
            <person name="Ohnishi M."/>
            <person name="Kurokawa K."/>
            <person name="Ishii K."/>
            <person name="Yokoyama K."/>
            <person name="Han C.-G."/>
            <person name="Ohtsubo E."/>
            <person name="Nakayama K."/>
            <person name="Murata T."/>
            <person name="Tanaka M."/>
            <person name="Tobe T."/>
            <person name="Iida T."/>
            <person name="Takami H."/>
            <person name="Honda T."/>
            <person name="Sasakawa C."/>
            <person name="Ogasawara N."/>
            <person name="Yasunaga T."/>
            <person name="Kuhara S."/>
            <person name="Shiba T."/>
            <person name="Hattori M."/>
            <person name="Shinagawa H."/>
        </authorList>
    </citation>
    <scope>NUCLEOTIDE SEQUENCE [LARGE SCALE GENOMIC DNA]</scope>
    <source>
        <strain>O157:H7 / Sakai / RIMD 0509952 / EHEC</strain>
    </source>
</reference>
<organism>
    <name type="scientific">Escherichia coli O157:H7</name>
    <dbReference type="NCBI Taxonomy" id="83334"/>
    <lineage>
        <taxon>Bacteria</taxon>
        <taxon>Pseudomonadati</taxon>
        <taxon>Pseudomonadota</taxon>
        <taxon>Gammaproteobacteria</taxon>
        <taxon>Enterobacterales</taxon>
        <taxon>Enterobacteriaceae</taxon>
        <taxon>Escherichia</taxon>
    </lineage>
</organism>
<sequence>MNGKKLYISDVTLRDGMHAIRHQYSLENVRQIAKALDDARVDSIEVAHGDGLQGSSFNYGFGAHSDLEWIEAAADVVKHAKIATLLLPGIGTIHDLKNAWQAGARVVRVATHCTEADVSAQHIQYARELGMDTVGFLMMSHMTTPENLAKQAKLMEGYGATCIYVVDSGGAMNMSDIRDRFRALKAVLKPETQTGMHAHHNLSLGVANSIAAVEEGCDRIDASLAGMGAGAGNAPLEVFIAAVDKLGWQHGADLYALMDAADDLVRPLQDRPVRVDRETLALGYAGVYSSFLRHCETAAARYGLSAVDILVELGKRRMVGGQEDMIVDVALDLRNNK</sequence>
<feature type="chain" id="PRO_0000337805" description="4-hydroxy-2-oxovalerate aldolase">
    <location>
        <begin position="1"/>
        <end position="337"/>
    </location>
</feature>
<feature type="domain" description="Pyruvate carboxyltransferase" evidence="1">
    <location>
        <begin position="6"/>
        <end position="258"/>
    </location>
</feature>
<feature type="active site" description="Proton acceptor" evidence="1">
    <location>
        <position position="18"/>
    </location>
</feature>
<feature type="binding site" evidence="1">
    <location>
        <begin position="14"/>
        <end position="15"/>
    </location>
    <ligand>
        <name>substrate</name>
    </ligand>
</feature>
<feature type="binding site" evidence="1">
    <location>
        <position position="15"/>
    </location>
    <ligand>
        <name>Mn(2+)</name>
        <dbReference type="ChEBI" id="CHEBI:29035"/>
    </ligand>
</feature>
<feature type="binding site" evidence="1">
    <location>
        <position position="168"/>
    </location>
    <ligand>
        <name>substrate</name>
    </ligand>
</feature>
<feature type="binding site" evidence="1">
    <location>
        <position position="197"/>
    </location>
    <ligand>
        <name>Mn(2+)</name>
        <dbReference type="ChEBI" id="CHEBI:29035"/>
    </ligand>
</feature>
<feature type="binding site" evidence="1">
    <location>
        <position position="197"/>
    </location>
    <ligand>
        <name>substrate</name>
    </ligand>
</feature>
<feature type="binding site" evidence="1">
    <location>
        <position position="199"/>
    </location>
    <ligand>
        <name>Mn(2+)</name>
        <dbReference type="ChEBI" id="CHEBI:29035"/>
    </ligand>
</feature>
<feature type="binding site" evidence="1">
    <location>
        <position position="288"/>
    </location>
    <ligand>
        <name>substrate</name>
    </ligand>
</feature>
<feature type="site" description="Transition state stabilizer" evidence="1">
    <location>
        <position position="14"/>
    </location>
</feature>
<name>HOA_ECO57</name>
<proteinExistence type="inferred from homology"/>
<evidence type="ECO:0000255" key="1">
    <source>
        <dbReference type="HAMAP-Rule" id="MF_01656"/>
    </source>
</evidence>
<comment type="function">
    <text evidence="1">Catalyzes the retro-aldol cleavage of 4-hydroxy-2-oxopentanoate to pyruvate and acetaldehyde. Is involved in the meta-cleavage pathway for the degradation of aromatic compounds.</text>
</comment>
<comment type="catalytic activity">
    <reaction evidence="1">
        <text>(S)-4-hydroxy-2-oxopentanoate = acetaldehyde + pyruvate</text>
        <dbReference type="Rhea" id="RHEA:22624"/>
        <dbReference type="ChEBI" id="CHEBI:15343"/>
        <dbReference type="ChEBI" id="CHEBI:15361"/>
        <dbReference type="ChEBI" id="CHEBI:73143"/>
        <dbReference type="EC" id="4.1.3.39"/>
    </reaction>
</comment>
<comment type="pathway">
    <text evidence="1">Aromatic compound metabolism; 3-phenylpropanoate degradation.</text>
</comment>
<comment type="subunit">
    <text evidence="1">Interacts with MhpF.</text>
</comment>
<comment type="similarity">
    <text evidence="1">Belongs to the 4-hydroxy-2-oxovalerate aldolase family.</text>
</comment>
<dbReference type="EC" id="4.1.3.39" evidence="1"/>
<dbReference type="EMBL" id="AE005174">
    <property type="protein sequence ID" value="AAG54703.1"/>
    <property type="molecule type" value="Genomic_DNA"/>
</dbReference>
<dbReference type="EMBL" id="BA000007">
    <property type="protein sequence ID" value="BAB33830.1"/>
    <property type="molecule type" value="Genomic_DNA"/>
</dbReference>
<dbReference type="PIR" id="C85530">
    <property type="entry name" value="C85530"/>
</dbReference>
<dbReference type="PIR" id="G90679">
    <property type="entry name" value="G90679"/>
</dbReference>
<dbReference type="RefSeq" id="NP_308434.1">
    <property type="nucleotide sequence ID" value="NC_002695.1"/>
</dbReference>
<dbReference type="RefSeq" id="WP_001013510.1">
    <property type="nucleotide sequence ID" value="NZ_VOAI01000005.1"/>
</dbReference>
<dbReference type="SMR" id="Q8X5J8"/>
<dbReference type="STRING" id="155864.Z0452"/>
<dbReference type="GeneID" id="914509"/>
<dbReference type="KEGG" id="ece:Z0452"/>
<dbReference type="KEGG" id="ecs:ECs_0407"/>
<dbReference type="PATRIC" id="fig|386585.9.peg.502"/>
<dbReference type="eggNOG" id="COG0119">
    <property type="taxonomic scope" value="Bacteria"/>
</dbReference>
<dbReference type="HOGENOM" id="CLU_049173_0_0_6"/>
<dbReference type="UniPathway" id="UPA00714"/>
<dbReference type="Proteomes" id="UP000000558">
    <property type="component" value="Chromosome"/>
</dbReference>
<dbReference type="Proteomes" id="UP000002519">
    <property type="component" value="Chromosome"/>
</dbReference>
<dbReference type="GO" id="GO:0003852">
    <property type="term" value="F:2-isopropylmalate synthase activity"/>
    <property type="evidence" value="ECO:0007669"/>
    <property type="project" value="TreeGrafter"/>
</dbReference>
<dbReference type="GO" id="GO:0008701">
    <property type="term" value="F:4-hydroxy-2-oxovalerate aldolase activity"/>
    <property type="evidence" value="ECO:0007669"/>
    <property type="project" value="UniProtKB-UniRule"/>
</dbReference>
<dbReference type="GO" id="GO:0030145">
    <property type="term" value="F:manganese ion binding"/>
    <property type="evidence" value="ECO:0007669"/>
    <property type="project" value="UniProtKB-UniRule"/>
</dbReference>
<dbReference type="GO" id="GO:0019380">
    <property type="term" value="P:3-phenylpropionate catabolic process"/>
    <property type="evidence" value="ECO:0007669"/>
    <property type="project" value="UniProtKB-UniRule"/>
</dbReference>
<dbReference type="GO" id="GO:0009098">
    <property type="term" value="P:L-leucine biosynthetic process"/>
    <property type="evidence" value="ECO:0007669"/>
    <property type="project" value="TreeGrafter"/>
</dbReference>
<dbReference type="CDD" id="cd07943">
    <property type="entry name" value="DRE_TIM_HOA"/>
    <property type="match status" value="1"/>
</dbReference>
<dbReference type="FunFam" id="1.10.8.60:FF:000042">
    <property type="entry name" value="4-hydroxy-2-oxovalerate aldolase"/>
    <property type="match status" value="1"/>
</dbReference>
<dbReference type="FunFam" id="3.20.20.70:FF:000072">
    <property type="entry name" value="4-hydroxy-2-oxovalerate aldolase"/>
    <property type="match status" value="1"/>
</dbReference>
<dbReference type="Gene3D" id="1.10.8.60">
    <property type="match status" value="1"/>
</dbReference>
<dbReference type="Gene3D" id="3.20.20.70">
    <property type="entry name" value="Aldolase class I"/>
    <property type="match status" value="1"/>
</dbReference>
<dbReference type="HAMAP" id="MF_01656">
    <property type="entry name" value="HOA"/>
    <property type="match status" value="1"/>
</dbReference>
<dbReference type="InterPro" id="IPR050073">
    <property type="entry name" value="2-IPM_HCS-like"/>
</dbReference>
<dbReference type="InterPro" id="IPR017629">
    <property type="entry name" value="4OH_2_O-val_aldolase"/>
</dbReference>
<dbReference type="InterPro" id="IPR013785">
    <property type="entry name" value="Aldolase_TIM"/>
</dbReference>
<dbReference type="InterPro" id="IPR012425">
    <property type="entry name" value="DmpG_comm"/>
</dbReference>
<dbReference type="InterPro" id="IPR035685">
    <property type="entry name" value="DRE_TIM_HOA"/>
</dbReference>
<dbReference type="InterPro" id="IPR000891">
    <property type="entry name" value="PYR_CT"/>
</dbReference>
<dbReference type="NCBIfam" id="TIGR03217">
    <property type="entry name" value="4OH_2_O_val_ald"/>
    <property type="match status" value="1"/>
</dbReference>
<dbReference type="NCBIfam" id="NF006049">
    <property type="entry name" value="PRK08195.1"/>
    <property type="match status" value="1"/>
</dbReference>
<dbReference type="PANTHER" id="PTHR10277:SF9">
    <property type="entry name" value="2-ISOPROPYLMALATE SYNTHASE 1, CHLOROPLASTIC-RELATED"/>
    <property type="match status" value="1"/>
</dbReference>
<dbReference type="PANTHER" id="PTHR10277">
    <property type="entry name" value="HOMOCITRATE SYNTHASE-RELATED"/>
    <property type="match status" value="1"/>
</dbReference>
<dbReference type="Pfam" id="PF07836">
    <property type="entry name" value="DmpG_comm"/>
    <property type="match status" value="1"/>
</dbReference>
<dbReference type="Pfam" id="PF00682">
    <property type="entry name" value="HMGL-like"/>
    <property type="match status" value="1"/>
</dbReference>
<dbReference type="SUPFAM" id="SSF51569">
    <property type="entry name" value="Aldolase"/>
    <property type="match status" value="1"/>
</dbReference>
<dbReference type="SUPFAM" id="SSF89000">
    <property type="entry name" value="post-HMGL domain-like"/>
    <property type="match status" value="1"/>
</dbReference>
<dbReference type="PROSITE" id="PS50991">
    <property type="entry name" value="PYR_CT"/>
    <property type="match status" value="1"/>
</dbReference>
<keyword id="KW-0058">Aromatic hydrocarbons catabolism</keyword>
<keyword id="KW-0456">Lyase</keyword>
<keyword id="KW-0464">Manganese</keyword>
<keyword id="KW-0479">Metal-binding</keyword>
<keyword id="KW-1185">Reference proteome</keyword>
<gene>
    <name evidence="1" type="primary">mhpE</name>
    <name type="ordered locus">Z0452</name>
    <name type="ordered locus">ECs0407</name>
</gene>
<protein>
    <recommendedName>
        <fullName evidence="1">4-hydroxy-2-oxovalerate aldolase</fullName>
        <shortName evidence="1">HOA</shortName>
        <ecNumber evidence="1">4.1.3.39</ecNumber>
    </recommendedName>
    <alternativeName>
        <fullName evidence="1">4-hydroxy-2-keto-pentanoic acid aldolase</fullName>
    </alternativeName>
    <alternativeName>
        <fullName evidence="1">4-hydroxy-2-oxopentanoate aldolase</fullName>
    </alternativeName>
</protein>